<accession>Q3ILQ2</accession>
<proteinExistence type="inferred from homology"/>
<feature type="chain" id="PRO_0000234872" description="Large ribosomal subunit protein uL10">
    <location>
        <begin position="1"/>
        <end position="164"/>
    </location>
</feature>
<reference key="1">
    <citation type="journal article" date="2005" name="Genome Res.">
        <title>Coping with cold: the genome of the versatile marine Antarctica bacterium Pseudoalteromonas haloplanktis TAC125.</title>
        <authorList>
            <person name="Medigue C."/>
            <person name="Krin E."/>
            <person name="Pascal G."/>
            <person name="Barbe V."/>
            <person name="Bernsel A."/>
            <person name="Bertin P.N."/>
            <person name="Cheung F."/>
            <person name="Cruveiller S."/>
            <person name="D'Amico S."/>
            <person name="Duilio A."/>
            <person name="Fang G."/>
            <person name="Feller G."/>
            <person name="Ho C."/>
            <person name="Mangenot S."/>
            <person name="Marino G."/>
            <person name="Nilsson J."/>
            <person name="Parrilli E."/>
            <person name="Rocha E.P.C."/>
            <person name="Rouy Z."/>
            <person name="Sekowska A."/>
            <person name="Tutino M.L."/>
            <person name="Vallenet D."/>
            <person name="von Heijne G."/>
            <person name="Danchin A."/>
        </authorList>
    </citation>
    <scope>NUCLEOTIDE SEQUENCE [LARGE SCALE GENOMIC DNA]</scope>
    <source>
        <strain>TAC 125</strain>
    </source>
</reference>
<organism>
    <name type="scientific">Pseudoalteromonas translucida (strain TAC 125)</name>
    <dbReference type="NCBI Taxonomy" id="326442"/>
    <lineage>
        <taxon>Bacteria</taxon>
        <taxon>Pseudomonadati</taxon>
        <taxon>Pseudomonadota</taxon>
        <taxon>Gammaproteobacteria</taxon>
        <taxon>Alteromonadales</taxon>
        <taxon>Pseudoalteromonadaceae</taxon>
        <taxon>Pseudoalteromonas</taxon>
    </lineage>
</organism>
<protein>
    <recommendedName>
        <fullName evidence="1">Large ribosomal subunit protein uL10</fullName>
    </recommendedName>
    <alternativeName>
        <fullName evidence="2">50S ribosomal protein L10</fullName>
    </alternativeName>
</protein>
<sequence>MALNLQGKQAIVAEVNEAANGALSAVVADSRGVTVGAITALRKEARANGVWMKVVRNTLAKRALEGTQFECLSDSFVGPSLIAFSSEHPGAAARIFSAFAKKNEKFELKTAAFEGNVVDAAMLATLPTYDEAVARLMSAMKEASAGKLCKTIEAVRVQKEEQAA</sequence>
<keyword id="KW-1185">Reference proteome</keyword>
<keyword id="KW-0687">Ribonucleoprotein</keyword>
<keyword id="KW-0689">Ribosomal protein</keyword>
<keyword id="KW-0694">RNA-binding</keyword>
<keyword id="KW-0699">rRNA-binding</keyword>
<comment type="function">
    <text evidence="1">Forms part of the ribosomal stalk, playing a central role in the interaction of the ribosome with GTP-bound translation factors.</text>
</comment>
<comment type="subunit">
    <text evidence="1">Part of the ribosomal stalk of the 50S ribosomal subunit. The N-terminus interacts with L11 and the large rRNA to form the base of the stalk. The C-terminus forms an elongated spine to which L12 dimers bind in a sequential fashion forming a multimeric L10(L12)X complex.</text>
</comment>
<comment type="similarity">
    <text evidence="1">Belongs to the universal ribosomal protein uL10 family.</text>
</comment>
<name>RL10_PSET1</name>
<gene>
    <name evidence="1" type="primary">rplJ</name>
    <name type="ordered locus">PSHAa0220</name>
</gene>
<dbReference type="EMBL" id="CR954246">
    <property type="protein sequence ID" value="CAI85323.1"/>
    <property type="molecule type" value="Genomic_DNA"/>
</dbReference>
<dbReference type="STRING" id="326442.PSHAa0220"/>
<dbReference type="KEGG" id="pha:PSHAa0220"/>
<dbReference type="eggNOG" id="COG0244">
    <property type="taxonomic scope" value="Bacteria"/>
</dbReference>
<dbReference type="HOGENOM" id="CLU_092227_0_2_6"/>
<dbReference type="BioCyc" id="PHAL326442:PSHA_RS01085-MONOMER"/>
<dbReference type="Proteomes" id="UP000006843">
    <property type="component" value="Chromosome I"/>
</dbReference>
<dbReference type="GO" id="GO:0015934">
    <property type="term" value="C:large ribosomal subunit"/>
    <property type="evidence" value="ECO:0007669"/>
    <property type="project" value="InterPro"/>
</dbReference>
<dbReference type="GO" id="GO:0070180">
    <property type="term" value="F:large ribosomal subunit rRNA binding"/>
    <property type="evidence" value="ECO:0007669"/>
    <property type="project" value="UniProtKB-UniRule"/>
</dbReference>
<dbReference type="GO" id="GO:0003735">
    <property type="term" value="F:structural constituent of ribosome"/>
    <property type="evidence" value="ECO:0007669"/>
    <property type="project" value="InterPro"/>
</dbReference>
<dbReference type="GO" id="GO:0006412">
    <property type="term" value="P:translation"/>
    <property type="evidence" value="ECO:0007669"/>
    <property type="project" value="UniProtKB-UniRule"/>
</dbReference>
<dbReference type="CDD" id="cd05797">
    <property type="entry name" value="Ribosomal_L10"/>
    <property type="match status" value="1"/>
</dbReference>
<dbReference type="FunFam" id="3.30.70.1730:FF:000001">
    <property type="entry name" value="50S ribosomal protein L10"/>
    <property type="match status" value="1"/>
</dbReference>
<dbReference type="Gene3D" id="3.30.70.1730">
    <property type="match status" value="1"/>
</dbReference>
<dbReference type="Gene3D" id="6.10.250.2350">
    <property type="match status" value="1"/>
</dbReference>
<dbReference type="HAMAP" id="MF_00362">
    <property type="entry name" value="Ribosomal_uL10"/>
    <property type="match status" value="1"/>
</dbReference>
<dbReference type="InterPro" id="IPR001790">
    <property type="entry name" value="Ribosomal_uL10"/>
</dbReference>
<dbReference type="InterPro" id="IPR043141">
    <property type="entry name" value="Ribosomal_uL10-like_sf"/>
</dbReference>
<dbReference type="InterPro" id="IPR022973">
    <property type="entry name" value="Ribosomal_uL10_bac"/>
</dbReference>
<dbReference type="InterPro" id="IPR047865">
    <property type="entry name" value="Ribosomal_uL10_bac_type"/>
</dbReference>
<dbReference type="InterPro" id="IPR002363">
    <property type="entry name" value="Ribosomal_uL10_CS_bac"/>
</dbReference>
<dbReference type="NCBIfam" id="NF000955">
    <property type="entry name" value="PRK00099.1-1"/>
    <property type="match status" value="1"/>
</dbReference>
<dbReference type="PANTHER" id="PTHR11560">
    <property type="entry name" value="39S RIBOSOMAL PROTEIN L10, MITOCHONDRIAL"/>
    <property type="match status" value="1"/>
</dbReference>
<dbReference type="Pfam" id="PF00466">
    <property type="entry name" value="Ribosomal_L10"/>
    <property type="match status" value="1"/>
</dbReference>
<dbReference type="SUPFAM" id="SSF160369">
    <property type="entry name" value="Ribosomal protein L10-like"/>
    <property type="match status" value="1"/>
</dbReference>
<dbReference type="PROSITE" id="PS01109">
    <property type="entry name" value="RIBOSOMAL_L10"/>
    <property type="match status" value="1"/>
</dbReference>
<evidence type="ECO:0000255" key="1">
    <source>
        <dbReference type="HAMAP-Rule" id="MF_00362"/>
    </source>
</evidence>
<evidence type="ECO:0000305" key="2"/>